<organism>
    <name type="scientific">Desulfitobacterium hafniense (strain Y51)</name>
    <dbReference type="NCBI Taxonomy" id="138119"/>
    <lineage>
        <taxon>Bacteria</taxon>
        <taxon>Bacillati</taxon>
        <taxon>Bacillota</taxon>
        <taxon>Clostridia</taxon>
        <taxon>Eubacteriales</taxon>
        <taxon>Desulfitobacteriaceae</taxon>
        <taxon>Desulfitobacterium</taxon>
    </lineage>
</organism>
<reference key="1">
    <citation type="journal article" date="2006" name="J. Bacteriol.">
        <title>Complete genome sequence of the dehalorespiring bacterium Desulfitobacterium hafniense Y51 and comparison with Dehalococcoides ethenogenes 195.</title>
        <authorList>
            <person name="Nonaka H."/>
            <person name="Keresztes G."/>
            <person name="Shinoda Y."/>
            <person name="Ikenaga Y."/>
            <person name="Abe M."/>
            <person name="Naito K."/>
            <person name="Inatomi K."/>
            <person name="Furukawa K."/>
            <person name="Inui M."/>
            <person name="Yukawa H."/>
        </authorList>
    </citation>
    <scope>NUCLEOTIDE SEQUENCE [LARGE SCALE GENOMIC DNA]</scope>
    <source>
        <strain>Y51</strain>
    </source>
</reference>
<protein>
    <recommendedName>
        <fullName evidence="1">Demethylmenaquinone methyltransferase</fullName>
        <ecNumber evidence="1">2.1.1.163</ecNumber>
    </recommendedName>
</protein>
<evidence type="ECO:0000255" key="1">
    <source>
        <dbReference type="HAMAP-Rule" id="MF_01813"/>
    </source>
</evidence>
<sequence>MKDCCGGYESEELLMDFSGKDKAAYVQDTFNSIAKRYDVMNTLMSFGLDKGWRKKAVQTVEAKPGMTMVDICCGTAQLSLELAMTVGEQGQITGLDFSENMLKKAQENLAGSPYRSIIELRQGDAMNLPFADNSFDGATVGWGLRNLPDLEKGVQEMIRVVKPGGMVVSLDMAKPTMPGFKQGYWLYFNKLVPLMGKIWAGKAKAYQYLHDSAVEFPSQQELANIFARCGLTETRYQNLAGGVVAIVSGRKPR</sequence>
<proteinExistence type="inferred from homology"/>
<keyword id="KW-0474">Menaquinone biosynthesis</keyword>
<keyword id="KW-0489">Methyltransferase</keyword>
<keyword id="KW-1185">Reference proteome</keyword>
<keyword id="KW-0949">S-adenosyl-L-methionine</keyword>
<keyword id="KW-0808">Transferase</keyword>
<accession>Q24W96</accession>
<feature type="chain" id="PRO_1000187752" description="Demethylmenaquinone methyltransferase">
    <location>
        <begin position="1"/>
        <end position="253"/>
    </location>
</feature>
<feature type="binding site" evidence="1">
    <location>
        <position position="75"/>
    </location>
    <ligand>
        <name>S-adenosyl-L-methionine</name>
        <dbReference type="ChEBI" id="CHEBI:59789"/>
    </ligand>
</feature>
<feature type="binding site" evidence="1">
    <location>
        <position position="96"/>
    </location>
    <ligand>
        <name>S-adenosyl-L-methionine</name>
        <dbReference type="ChEBI" id="CHEBI:59789"/>
    </ligand>
</feature>
<feature type="binding site" evidence="1">
    <location>
        <begin position="124"/>
        <end position="125"/>
    </location>
    <ligand>
        <name>S-adenosyl-L-methionine</name>
        <dbReference type="ChEBI" id="CHEBI:59789"/>
    </ligand>
</feature>
<dbReference type="EC" id="2.1.1.163" evidence="1"/>
<dbReference type="EMBL" id="AP008230">
    <property type="protein sequence ID" value="BAE83696.1"/>
    <property type="molecule type" value="Genomic_DNA"/>
</dbReference>
<dbReference type="RefSeq" id="WP_005813012.1">
    <property type="nucleotide sequence ID" value="NC_007907.1"/>
</dbReference>
<dbReference type="SMR" id="Q24W96"/>
<dbReference type="STRING" id="138119.DSY1907"/>
<dbReference type="KEGG" id="dsy:DSY1907"/>
<dbReference type="eggNOG" id="COG2226">
    <property type="taxonomic scope" value="Bacteria"/>
</dbReference>
<dbReference type="HOGENOM" id="CLU_037990_0_0_9"/>
<dbReference type="UniPathway" id="UPA00079">
    <property type="reaction ID" value="UER00169"/>
</dbReference>
<dbReference type="Proteomes" id="UP000001946">
    <property type="component" value="Chromosome"/>
</dbReference>
<dbReference type="GO" id="GO:0043770">
    <property type="term" value="F:demethylmenaquinone methyltransferase activity"/>
    <property type="evidence" value="ECO:0007669"/>
    <property type="project" value="UniProtKB-UniRule"/>
</dbReference>
<dbReference type="GO" id="GO:0009234">
    <property type="term" value="P:menaquinone biosynthetic process"/>
    <property type="evidence" value="ECO:0007669"/>
    <property type="project" value="UniProtKB-UniRule"/>
</dbReference>
<dbReference type="GO" id="GO:0032259">
    <property type="term" value="P:methylation"/>
    <property type="evidence" value="ECO:0007669"/>
    <property type="project" value="UniProtKB-KW"/>
</dbReference>
<dbReference type="CDD" id="cd02440">
    <property type="entry name" value="AdoMet_MTases"/>
    <property type="match status" value="1"/>
</dbReference>
<dbReference type="Gene3D" id="3.40.50.150">
    <property type="entry name" value="Vaccinia Virus protein VP39"/>
    <property type="match status" value="1"/>
</dbReference>
<dbReference type="HAMAP" id="MF_01813">
    <property type="entry name" value="MenG_UbiE_methyltr"/>
    <property type="match status" value="1"/>
</dbReference>
<dbReference type="InterPro" id="IPR029063">
    <property type="entry name" value="SAM-dependent_MTases_sf"/>
</dbReference>
<dbReference type="InterPro" id="IPR004033">
    <property type="entry name" value="UbiE/COQ5_MeTrFase"/>
</dbReference>
<dbReference type="InterPro" id="IPR023576">
    <property type="entry name" value="UbiE/COQ5_MeTrFase_CS"/>
</dbReference>
<dbReference type="NCBIfam" id="TIGR01934">
    <property type="entry name" value="MenG_MenH_UbiE"/>
    <property type="match status" value="1"/>
</dbReference>
<dbReference type="NCBIfam" id="NF001243">
    <property type="entry name" value="PRK00216.1-4"/>
    <property type="match status" value="1"/>
</dbReference>
<dbReference type="NCBIfam" id="NF001244">
    <property type="entry name" value="PRK00216.1-5"/>
    <property type="match status" value="1"/>
</dbReference>
<dbReference type="PANTHER" id="PTHR43591:SF24">
    <property type="entry name" value="2-METHOXY-6-POLYPRENYL-1,4-BENZOQUINOL METHYLASE, MITOCHONDRIAL"/>
    <property type="match status" value="1"/>
</dbReference>
<dbReference type="PANTHER" id="PTHR43591">
    <property type="entry name" value="METHYLTRANSFERASE"/>
    <property type="match status" value="1"/>
</dbReference>
<dbReference type="Pfam" id="PF01209">
    <property type="entry name" value="Ubie_methyltran"/>
    <property type="match status" value="1"/>
</dbReference>
<dbReference type="SUPFAM" id="SSF53335">
    <property type="entry name" value="S-adenosyl-L-methionine-dependent methyltransferases"/>
    <property type="match status" value="1"/>
</dbReference>
<dbReference type="PROSITE" id="PS51608">
    <property type="entry name" value="SAM_MT_UBIE"/>
    <property type="match status" value="1"/>
</dbReference>
<dbReference type="PROSITE" id="PS01183">
    <property type="entry name" value="UBIE_1"/>
    <property type="match status" value="1"/>
</dbReference>
<name>MENG_DESHY</name>
<gene>
    <name evidence="1" type="primary">menG</name>
    <name type="ordered locus">DSY1907</name>
</gene>
<comment type="function">
    <text evidence="1">Methyltransferase required for the conversion of demethylmenaquinol (DMKH2) to menaquinol (MKH2).</text>
</comment>
<comment type="catalytic activity">
    <reaction evidence="1">
        <text>a 2-demethylmenaquinol + S-adenosyl-L-methionine = a menaquinol + S-adenosyl-L-homocysteine + H(+)</text>
        <dbReference type="Rhea" id="RHEA:42640"/>
        <dbReference type="Rhea" id="RHEA-COMP:9539"/>
        <dbReference type="Rhea" id="RHEA-COMP:9563"/>
        <dbReference type="ChEBI" id="CHEBI:15378"/>
        <dbReference type="ChEBI" id="CHEBI:18151"/>
        <dbReference type="ChEBI" id="CHEBI:55437"/>
        <dbReference type="ChEBI" id="CHEBI:57856"/>
        <dbReference type="ChEBI" id="CHEBI:59789"/>
        <dbReference type="EC" id="2.1.1.163"/>
    </reaction>
</comment>
<comment type="pathway">
    <text evidence="1">Quinol/quinone metabolism; menaquinone biosynthesis; menaquinol from 1,4-dihydroxy-2-naphthoate: step 2/2.</text>
</comment>
<comment type="similarity">
    <text evidence="1">Belongs to the class I-like SAM-binding methyltransferase superfamily. MenG/UbiE family.</text>
</comment>